<evidence type="ECO:0000255" key="1">
    <source>
        <dbReference type="HAMAP-Rule" id="MF_01526"/>
    </source>
</evidence>
<dbReference type="EMBL" id="BA000004">
    <property type="protein sequence ID" value="BAB04868.1"/>
    <property type="molecule type" value="Genomic_DNA"/>
</dbReference>
<dbReference type="PIR" id="E83793">
    <property type="entry name" value="E83793"/>
</dbReference>
<dbReference type="RefSeq" id="WP_010897319.1">
    <property type="nucleotide sequence ID" value="NC_002570.2"/>
</dbReference>
<dbReference type="SMR" id="Q9KDR2"/>
<dbReference type="STRING" id="272558.gene:10727043"/>
<dbReference type="GeneID" id="87596775"/>
<dbReference type="KEGG" id="bha:BH1149"/>
<dbReference type="eggNOG" id="COG3679">
    <property type="taxonomic scope" value="Bacteria"/>
</dbReference>
<dbReference type="HOGENOM" id="CLU_140243_3_0_9"/>
<dbReference type="OrthoDB" id="9811402at2"/>
<dbReference type="Proteomes" id="UP000001258">
    <property type="component" value="Chromosome"/>
</dbReference>
<dbReference type="Gene3D" id="1.20.1500.10">
    <property type="entry name" value="YheA/YmcA-like"/>
    <property type="match status" value="1"/>
</dbReference>
<dbReference type="HAMAP" id="MF_01526">
    <property type="entry name" value="UPF0342"/>
    <property type="match status" value="1"/>
</dbReference>
<dbReference type="InterPro" id="IPR010368">
    <property type="entry name" value="Com_YlbF"/>
</dbReference>
<dbReference type="InterPro" id="IPR023378">
    <property type="entry name" value="YheA/YmcA-like_dom_sf"/>
</dbReference>
<dbReference type="Pfam" id="PF06133">
    <property type="entry name" value="Com_YlbF"/>
    <property type="match status" value="1"/>
</dbReference>
<dbReference type="SUPFAM" id="SSF158622">
    <property type="entry name" value="YheA/YmcA-like"/>
    <property type="match status" value="1"/>
</dbReference>
<comment type="similarity">
    <text evidence="1">Belongs to the UPF0342 family.</text>
</comment>
<accession>Q9KDR2</accession>
<reference key="1">
    <citation type="journal article" date="2000" name="Nucleic Acids Res.">
        <title>Complete genome sequence of the alkaliphilic bacterium Bacillus halodurans and genomic sequence comparison with Bacillus subtilis.</title>
        <authorList>
            <person name="Takami H."/>
            <person name="Nakasone K."/>
            <person name="Takaki Y."/>
            <person name="Maeno G."/>
            <person name="Sasaki R."/>
            <person name="Masui N."/>
            <person name="Fuji F."/>
            <person name="Hirama C."/>
            <person name="Nakamura Y."/>
            <person name="Ogasawara N."/>
            <person name="Kuhara S."/>
            <person name="Horikoshi K."/>
        </authorList>
    </citation>
    <scope>NUCLEOTIDE SEQUENCE [LARGE SCALE GENOMIC DNA]</scope>
    <source>
        <strain>ATCC BAA-125 / DSM 18197 / FERM 7344 / JCM 9153 / C-125</strain>
    </source>
</reference>
<gene>
    <name type="ordered locus">BH1149</name>
</gene>
<feature type="chain" id="PRO_0000109968" description="UPF0342 protein BH1149">
    <location>
        <begin position="1"/>
        <end position="116"/>
    </location>
</feature>
<keyword id="KW-1185">Reference proteome</keyword>
<name>Y1149_HALH5</name>
<organism>
    <name type="scientific">Halalkalibacterium halodurans (strain ATCC BAA-125 / DSM 18197 / FERM 7344 / JCM 9153 / C-125)</name>
    <name type="common">Bacillus halodurans</name>
    <dbReference type="NCBI Taxonomy" id="272558"/>
    <lineage>
        <taxon>Bacteria</taxon>
        <taxon>Bacillati</taxon>
        <taxon>Bacillota</taxon>
        <taxon>Bacilli</taxon>
        <taxon>Bacillales</taxon>
        <taxon>Bacillaceae</taxon>
        <taxon>Halalkalibacterium (ex Joshi et al. 2022)</taxon>
    </lineage>
</organism>
<proteinExistence type="inferred from homology"/>
<sequence length="116" mass="13566">MSNVYDKAQELKQALAESEEFKALKSLHTQIDQDDIAKRLLENFRQLQLDLQQKQMQGVQITEEEAQKAQQQFELVQQHELISKLMEEEQRLSVVIGDLNRIITEPLEEIYGNPNE</sequence>
<protein>
    <recommendedName>
        <fullName evidence="1">UPF0342 protein BH1149</fullName>
    </recommendedName>
</protein>